<accession>B2I1J5</accession>
<gene>
    <name evidence="1" type="primary">murG</name>
    <name type="ordered locus">ACICU_03534</name>
</gene>
<reference key="1">
    <citation type="journal article" date="2008" name="Antimicrob. Agents Chemother.">
        <title>Whole-genome pyrosequencing of an epidemic multidrug-resistant Acinetobacter baumannii strain belonging to the European clone II group.</title>
        <authorList>
            <person name="Iacono M."/>
            <person name="Villa L."/>
            <person name="Fortini D."/>
            <person name="Bordoni R."/>
            <person name="Imperi F."/>
            <person name="Bonnal R.J."/>
            <person name="Sicheritz-Ponten T."/>
            <person name="De Bellis G."/>
            <person name="Visca P."/>
            <person name="Cassone A."/>
            <person name="Carattoli A."/>
        </authorList>
    </citation>
    <scope>NUCLEOTIDE SEQUENCE [LARGE SCALE GENOMIC DNA]</scope>
    <source>
        <strain>ACICU</strain>
    </source>
</reference>
<organism>
    <name type="scientific">Acinetobacter baumannii (strain ACICU)</name>
    <dbReference type="NCBI Taxonomy" id="405416"/>
    <lineage>
        <taxon>Bacteria</taxon>
        <taxon>Pseudomonadati</taxon>
        <taxon>Pseudomonadota</taxon>
        <taxon>Gammaproteobacteria</taxon>
        <taxon>Moraxellales</taxon>
        <taxon>Moraxellaceae</taxon>
        <taxon>Acinetobacter</taxon>
        <taxon>Acinetobacter calcoaceticus/baumannii complex</taxon>
    </lineage>
</organism>
<protein>
    <recommendedName>
        <fullName evidence="1">UDP-N-acetylglucosamine--N-acetylmuramyl-(pentapeptide) pyrophosphoryl-undecaprenol N-acetylglucosamine transferase</fullName>
        <ecNumber evidence="1">2.4.1.227</ecNumber>
    </recommendedName>
    <alternativeName>
        <fullName evidence="1">Undecaprenyl-PP-MurNAc-pentapeptide-UDPGlcNAc GlcNAc transferase</fullName>
    </alternativeName>
</protein>
<dbReference type="EC" id="2.4.1.227" evidence="1"/>
<dbReference type="EMBL" id="CP000863">
    <property type="protein sequence ID" value="ACC58843.1"/>
    <property type="molecule type" value="Genomic_DNA"/>
</dbReference>
<dbReference type="RefSeq" id="WP_000132431.1">
    <property type="nucleotide sequence ID" value="NZ_CP031380.1"/>
</dbReference>
<dbReference type="SMR" id="B2I1J5"/>
<dbReference type="CAZy" id="GT28">
    <property type="family name" value="Glycosyltransferase Family 28"/>
</dbReference>
<dbReference type="KEGG" id="abc:ACICU_03534"/>
<dbReference type="HOGENOM" id="CLU_037404_2_0_6"/>
<dbReference type="UniPathway" id="UPA00219"/>
<dbReference type="Proteomes" id="UP000008839">
    <property type="component" value="Chromosome"/>
</dbReference>
<dbReference type="GO" id="GO:0005886">
    <property type="term" value="C:plasma membrane"/>
    <property type="evidence" value="ECO:0007669"/>
    <property type="project" value="UniProtKB-SubCell"/>
</dbReference>
<dbReference type="GO" id="GO:0051991">
    <property type="term" value="F:UDP-N-acetyl-D-glucosamine:N-acetylmuramoyl-L-alanyl-D-glutamyl-meso-2,6-diaminopimelyl-D-alanyl-D-alanine-diphosphoundecaprenol 4-beta-N-acetylglucosaminlytransferase activity"/>
    <property type="evidence" value="ECO:0007669"/>
    <property type="project" value="RHEA"/>
</dbReference>
<dbReference type="GO" id="GO:0050511">
    <property type="term" value="F:undecaprenyldiphospho-muramoylpentapeptide beta-N-acetylglucosaminyltransferase activity"/>
    <property type="evidence" value="ECO:0007669"/>
    <property type="project" value="UniProtKB-UniRule"/>
</dbReference>
<dbReference type="GO" id="GO:0005975">
    <property type="term" value="P:carbohydrate metabolic process"/>
    <property type="evidence" value="ECO:0007669"/>
    <property type="project" value="InterPro"/>
</dbReference>
<dbReference type="GO" id="GO:0051301">
    <property type="term" value="P:cell division"/>
    <property type="evidence" value="ECO:0007669"/>
    <property type="project" value="UniProtKB-KW"/>
</dbReference>
<dbReference type="GO" id="GO:0071555">
    <property type="term" value="P:cell wall organization"/>
    <property type="evidence" value="ECO:0007669"/>
    <property type="project" value="UniProtKB-KW"/>
</dbReference>
<dbReference type="GO" id="GO:0030259">
    <property type="term" value="P:lipid glycosylation"/>
    <property type="evidence" value="ECO:0007669"/>
    <property type="project" value="UniProtKB-UniRule"/>
</dbReference>
<dbReference type="GO" id="GO:0009252">
    <property type="term" value="P:peptidoglycan biosynthetic process"/>
    <property type="evidence" value="ECO:0007669"/>
    <property type="project" value="UniProtKB-UniRule"/>
</dbReference>
<dbReference type="GO" id="GO:0008360">
    <property type="term" value="P:regulation of cell shape"/>
    <property type="evidence" value="ECO:0007669"/>
    <property type="project" value="UniProtKB-KW"/>
</dbReference>
<dbReference type="CDD" id="cd03785">
    <property type="entry name" value="GT28_MurG"/>
    <property type="match status" value="1"/>
</dbReference>
<dbReference type="Gene3D" id="3.40.50.2000">
    <property type="entry name" value="Glycogen Phosphorylase B"/>
    <property type="match status" value="2"/>
</dbReference>
<dbReference type="HAMAP" id="MF_00033">
    <property type="entry name" value="MurG"/>
    <property type="match status" value="1"/>
</dbReference>
<dbReference type="InterPro" id="IPR006009">
    <property type="entry name" value="GlcNAc_MurG"/>
</dbReference>
<dbReference type="InterPro" id="IPR007235">
    <property type="entry name" value="Glyco_trans_28_C"/>
</dbReference>
<dbReference type="InterPro" id="IPR004276">
    <property type="entry name" value="GlycoTrans_28_N"/>
</dbReference>
<dbReference type="NCBIfam" id="TIGR01133">
    <property type="entry name" value="murG"/>
    <property type="match status" value="1"/>
</dbReference>
<dbReference type="PANTHER" id="PTHR21015:SF22">
    <property type="entry name" value="GLYCOSYLTRANSFERASE"/>
    <property type="match status" value="1"/>
</dbReference>
<dbReference type="PANTHER" id="PTHR21015">
    <property type="entry name" value="UDP-N-ACETYLGLUCOSAMINE--N-ACETYLMURAMYL-(PENTAPEPTIDE) PYROPHOSPHORYL-UNDECAPRENOL N-ACETYLGLUCOSAMINE TRANSFERASE 1"/>
    <property type="match status" value="1"/>
</dbReference>
<dbReference type="Pfam" id="PF04101">
    <property type="entry name" value="Glyco_tran_28_C"/>
    <property type="match status" value="1"/>
</dbReference>
<dbReference type="Pfam" id="PF03033">
    <property type="entry name" value="Glyco_transf_28"/>
    <property type="match status" value="1"/>
</dbReference>
<dbReference type="SUPFAM" id="SSF53756">
    <property type="entry name" value="UDP-Glycosyltransferase/glycogen phosphorylase"/>
    <property type="match status" value="1"/>
</dbReference>
<sequence length="365" mass="39366">MTDSQQSKPKHVMMMAAGTGGHVFPALAVAKQLQQQGCQVSWLATPTGMENRLLKDQNIPIYQIDIQGVRGNGVIRKLAAPFKILKATFSAMRYMKQLKVDAVAGFGGYVAGPGGLAARLLGIPVLIHEQNAVAGFTNAQLSRVAKVVCEAFPNTFPASEKVVTTGNPVRREITDILSPKWRYDEREQAGKLLNILIVGGSLGAKALNERLPPALKQLEVPLNIFHQCGQQQVEATQALYADAPANLTVQVLPFIEDMAKAYSEADLIICRAGALTVTEVATAGVAAVFVPLPIAVDDHQTANAKFLADVGAAKICQQSTMTPEVLNQLFTTLMNRQLLTEMAVKARQHAQPNATQHVVDLIQKM</sequence>
<evidence type="ECO:0000255" key="1">
    <source>
        <dbReference type="HAMAP-Rule" id="MF_00033"/>
    </source>
</evidence>
<feature type="chain" id="PRO_1000090397" description="UDP-N-acetylglucosamine--N-acetylmuramyl-(pentapeptide) pyrophosphoryl-undecaprenol N-acetylglucosamine transferase">
    <location>
        <begin position="1"/>
        <end position="365"/>
    </location>
</feature>
<feature type="binding site" evidence="1">
    <location>
        <begin position="19"/>
        <end position="21"/>
    </location>
    <ligand>
        <name>UDP-N-acetyl-alpha-D-glucosamine</name>
        <dbReference type="ChEBI" id="CHEBI:57705"/>
    </ligand>
</feature>
<feature type="binding site" evidence="1">
    <location>
        <position position="131"/>
    </location>
    <ligand>
        <name>UDP-N-acetyl-alpha-D-glucosamine</name>
        <dbReference type="ChEBI" id="CHEBI:57705"/>
    </ligand>
</feature>
<feature type="binding site" evidence="1">
    <location>
        <position position="170"/>
    </location>
    <ligand>
        <name>UDP-N-acetyl-alpha-D-glucosamine</name>
        <dbReference type="ChEBI" id="CHEBI:57705"/>
    </ligand>
</feature>
<feature type="binding site" evidence="1">
    <location>
        <position position="201"/>
    </location>
    <ligand>
        <name>UDP-N-acetyl-alpha-D-glucosamine</name>
        <dbReference type="ChEBI" id="CHEBI:57705"/>
    </ligand>
</feature>
<feature type="binding site" evidence="1">
    <location>
        <position position="255"/>
    </location>
    <ligand>
        <name>UDP-N-acetyl-alpha-D-glucosamine</name>
        <dbReference type="ChEBI" id="CHEBI:57705"/>
    </ligand>
</feature>
<feature type="binding site" evidence="1">
    <location>
        <begin position="274"/>
        <end position="279"/>
    </location>
    <ligand>
        <name>UDP-N-acetyl-alpha-D-glucosamine</name>
        <dbReference type="ChEBI" id="CHEBI:57705"/>
    </ligand>
</feature>
<feature type="binding site" evidence="1">
    <location>
        <position position="300"/>
    </location>
    <ligand>
        <name>UDP-N-acetyl-alpha-D-glucosamine</name>
        <dbReference type="ChEBI" id="CHEBI:57705"/>
    </ligand>
</feature>
<proteinExistence type="inferred from homology"/>
<comment type="function">
    <text evidence="1">Cell wall formation. Catalyzes the transfer of a GlcNAc subunit on undecaprenyl-pyrophosphoryl-MurNAc-pentapeptide (lipid intermediate I) to form undecaprenyl-pyrophosphoryl-MurNAc-(pentapeptide)GlcNAc (lipid intermediate II).</text>
</comment>
<comment type="catalytic activity">
    <reaction evidence="1">
        <text>di-trans,octa-cis-undecaprenyl diphospho-N-acetyl-alpha-D-muramoyl-L-alanyl-D-glutamyl-meso-2,6-diaminopimeloyl-D-alanyl-D-alanine + UDP-N-acetyl-alpha-D-glucosamine = di-trans,octa-cis-undecaprenyl diphospho-[N-acetyl-alpha-D-glucosaminyl-(1-&gt;4)]-N-acetyl-alpha-D-muramoyl-L-alanyl-D-glutamyl-meso-2,6-diaminopimeloyl-D-alanyl-D-alanine + UDP + H(+)</text>
        <dbReference type="Rhea" id="RHEA:31227"/>
        <dbReference type="ChEBI" id="CHEBI:15378"/>
        <dbReference type="ChEBI" id="CHEBI:57705"/>
        <dbReference type="ChEBI" id="CHEBI:58223"/>
        <dbReference type="ChEBI" id="CHEBI:61387"/>
        <dbReference type="ChEBI" id="CHEBI:61388"/>
        <dbReference type="EC" id="2.4.1.227"/>
    </reaction>
</comment>
<comment type="pathway">
    <text evidence="1">Cell wall biogenesis; peptidoglycan biosynthesis.</text>
</comment>
<comment type="subcellular location">
    <subcellularLocation>
        <location evidence="1">Cell inner membrane</location>
        <topology evidence="1">Peripheral membrane protein</topology>
        <orientation evidence="1">Cytoplasmic side</orientation>
    </subcellularLocation>
</comment>
<comment type="similarity">
    <text evidence="1">Belongs to the glycosyltransferase 28 family. MurG subfamily.</text>
</comment>
<keyword id="KW-0131">Cell cycle</keyword>
<keyword id="KW-0132">Cell division</keyword>
<keyword id="KW-0997">Cell inner membrane</keyword>
<keyword id="KW-1003">Cell membrane</keyword>
<keyword id="KW-0133">Cell shape</keyword>
<keyword id="KW-0961">Cell wall biogenesis/degradation</keyword>
<keyword id="KW-0328">Glycosyltransferase</keyword>
<keyword id="KW-0472">Membrane</keyword>
<keyword id="KW-0573">Peptidoglycan synthesis</keyword>
<keyword id="KW-0808">Transferase</keyword>
<name>MURG_ACIBC</name>